<gene>
    <name type="primary">pgam-5</name>
    <name type="ORF">CBG13006</name>
</gene>
<comment type="function">
    <text evidence="2">Displays phosphatase activity for serine/threonine residues. Has apparently no phosphoglycerate mutase activity.</text>
</comment>
<comment type="catalytic activity">
    <reaction evidence="2">
        <text>O-phospho-L-seryl-[protein] + H2O = L-seryl-[protein] + phosphate</text>
        <dbReference type="Rhea" id="RHEA:20629"/>
        <dbReference type="Rhea" id="RHEA-COMP:9863"/>
        <dbReference type="Rhea" id="RHEA-COMP:11604"/>
        <dbReference type="ChEBI" id="CHEBI:15377"/>
        <dbReference type="ChEBI" id="CHEBI:29999"/>
        <dbReference type="ChEBI" id="CHEBI:43474"/>
        <dbReference type="ChEBI" id="CHEBI:83421"/>
        <dbReference type="EC" id="3.1.3.16"/>
    </reaction>
</comment>
<comment type="catalytic activity">
    <reaction evidence="2">
        <text>O-phospho-L-threonyl-[protein] + H2O = L-threonyl-[protein] + phosphate</text>
        <dbReference type="Rhea" id="RHEA:47004"/>
        <dbReference type="Rhea" id="RHEA-COMP:11060"/>
        <dbReference type="Rhea" id="RHEA-COMP:11605"/>
        <dbReference type="ChEBI" id="CHEBI:15377"/>
        <dbReference type="ChEBI" id="CHEBI:30013"/>
        <dbReference type="ChEBI" id="CHEBI:43474"/>
        <dbReference type="ChEBI" id="CHEBI:61977"/>
        <dbReference type="EC" id="3.1.3.16"/>
    </reaction>
</comment>
<comment type="subunit">
    <text evidence="1">Interacts with skn-1.</text>
</comment>
<comment type="subcellular location">
    <subcellularLocation>
        <location evidence="2">Mitochondrion outer membrane</location>
        <topology evidence="3">Single-pass membrane protein</topology>
    </subcellularLocation>
</comment>
<comment type="similarity">
    <text evidence="4">Belongs to the phosphoglycerate mutase family. BPG-dependent PGAM subfamily.</text>
</comment>
<name>PGAM5_CAEBR</name>
<feature type="chain" id="PRO_0000288788" description="Serine/threonine-protein phosphatase Pgam5, mitochondrial">
    <location>
        <begin position="1"/>
        <end position="283"/>
    </location>
</feature>
<feature type="transmembrane region" description="Helical" evidence="3">
    <location>
        <begin position="7"/>
        <end position="23"/>
    </location>
</feature>
<reference key="1">
    <citation type="journal article" date="2003" name="PLoS Biol.">
        <title>The genome sequence of Caenorhabditis briggsae: a platform for comparative genomics.</title>
        <authorList>
            <person name="Stein L.D."/>
            <person name="Bao Z."/>
            <person name="Blasiar D."/>
            <person name="Blumenthal T."/>
            <person name="Brent M.R."/>
            <person name="Chen N."/>
            <person name="Chinwalla A."/>
            <person name="Clarke L."/>
            <person name="Clee C."/>
            <person name="Coghlan A."/>
            <person name="Coulson A."/>
            <person name="D'Eustachio P."/>
            <person name="Fitch D.H.A."/>
            <person name="Fulton L.A."/>
            <person name="Fulton R.E."/>
            <person name="Griffiths-Jones S."/>
            <person name="Harris T.W."/>
            <person name="Hillier L.W."/>
            <person name="Kamath R."/>
            <person name="Kuwabara P.E."/>
            <person name="Mardis E.R."/>
            <person name="Marra M.A."/>
            <person name="Miner T.L."/>
            <person name="Minx P."/>
            <person name="Mullikin J.C."/>
            <person name="Plumb R.W."/>
            <person name="Rogers J."/>
            <person name="Schein J.E."/>
            <person name="Sohrmann M."/>
            <person name="Spieth J."/>
            <person name="Stajich J.E."/>
            <person name="Wei C."/>
            <person name="Willey D."/>
            <person name="Wilson R.K."/>
            <person name="Durbin R.M."/>
            <person name="Waterston R.H."/>
        </authorList>
    </citation>
    <scope>NUCLEOTIDE SEQUENCE [LARGE SCALE GENOMIC DNA]</scope>
    <source>
        <strain>AF16</strain>
    </source>
</reference>
<evidence type="ECO:0000250" key="1">
    <source>
        <dbReference type="UniProtKB" id="Q09422"/>
    </source>
</evidence>
<evidence type="ECO:0000250" key="2">
    <source>
        <dbReference type="UniProtKB" id="Q96HS1"/>
    </source>
</evidence>
<evidence type="ECO:0000255" key="3"/>
<evidence type="ECO:0000305" key="4"/>
<keyword id="KW-0378">Hydrolase</keyword>
<keyword id="KW-0472">Membrane</keyword>
<keyword id="KW-0496">Mitochondrion</keyword>
<keyword id="KW-1000">Mitochondrion outer membrane</keyword>
<keyword id="KW-1185">Reference proteome</keyword>
<keyword id="KW-0812">Transmembrane</keyword>
<keyword id="KW-1133">Transmembrane helix</keyword>
<dbReference type="EC" id="3.1.3.16" evidence="2"/>
<dbReference type="EMBL" id="HE600938">
    <property type="protein sequence ID" value="CAP31880.2"/>
    <property type="molecule type" value="Genomic_DNA"/>
</dbReference>
<dbReference type="SMR" id="Q61CA3"/>
<dbReference type="FunCoup" id="Q61CA3">
    <property type="interactions" value="2352"/>
</dbReference>
<dbReference type="STRING" id="6238.Q61CA3"/>
<dbReference type="EnsemblMetazoa" id="CBG13006a.1">
    <property type="protein sequence ID" value="CBG13006a.1"/>
    <property type="gene ID" value="WBGene00033850"/>
</dbReference>
<dbReference type="WormBase" id="CBG13006a">
    <property type="protein sequence ID" value="CBP36220"/>
    <property type="gene ID" value="WBGene00033850"/>
    <property type="gene designation" value="Cbr-pgam-5"/>
</dbReference>
<dbReference type="eggNOG" id="KOG4609">
    <property type="taxonomic scope" value="Eukaryota"/>
</dbReference>
<dbReference type="HOGENOM" id="CLU_063130_1_1_1"/>
<dbReference type="InParanoid" id="Q61CA3"/>
<dbReference type="OMA" id="QLPLFAW"/>
<dbReference type="OrthoDB" id="2118094at2759"/>
<dbReference type="Proteomes" id="UP000008549">
    <property type="component" value="Unassembled WGS sequence"/>
</dbReference>
<dbReference type="GO" id="GO:0005741">
    <property type="term" value="C:mitochondrial outer membrane"/>
    <property type="evidence" value="ECO:0007669"/>
    <property type="project" value="UniProtKB-SubCell"/>
</dbReference>
<dbReference type="GO" id="GO:0005739">
    <property type="term" value="C:mitochondrion"/>
    <property type="evidence" value="ECO:0000318"/>
    <property type="project" value="GO_Central"/>
</dbReference>
<dbReference type="GO" id="GO:0004721">
    <property type="term" value="F:phosphoprotein phosphatase activity"/>
    <property type="evidence" value="ECO:0000250"/>
    <property type="project" value="UniProtKB"/>
</dbReference>
<dbReference type="GO" id="GO:0004722">
    <property type="term" value="F:protein serine/threonine phosphatase activity"/>
    <property type="evidence" value="ECO:0000318"/>
    <property type="project" value="GO_Central"/>
</dbReference>
<dbReference type="GO" id="GO:0090141">
    <property type="term" value="P:positive regulation of mitochondrial fission"/>
    <property type="evidence" value="ECO:0000318"/>
    <property type="project" value="GO_Central"/>
</dbReference>
<dbReference type="GO" id="GO:0006470">
    <property type="term" value="P:protein dephosphorylation"/>
    <property type="evidence" value="ECO:0000250"/>
    <property type="project" value="UniProtKB"/>
</dbReference>
<dbReference type="CDD" id="cd07067">
    <property type="entry name" value="HP_PGM_like"/>
    <property type="match status" value="1"/>
</dbReference>
<dbReference type="FunFam" id="3.40.50.1240:FF:000009">
    <property type="entry name" value="serine/threonine-protein phosphatase PGAM5, mitochondrial isoform X1"/>
    <property type="match status" value="1"/>
</dbReference>
<dbReference type="Gene3D" id="3.40.50.1240">
    <property type="entry name" value="Phosphoglycerate mutase-like"/>
    <property type="match status" value="1"/>
</dbReference>
<dbReference type="InterPro" id="IPR013078">
    <property type="entry name" value="His_Pase_superF_clade-1"/>
</dbReference>
<dbReference type="InterPro" id="IPR029033">
    <property type="entry name" value="His_PPase_superfam"/>
</dbReference>
<dbReference type="InterPro" id="IPR051021">
    <property type="entry name" value="Mito_Ser/Thr_phosphatase"/>
</dbReference>
<dbReference type="PANTHER" id="PTHR20935">
    <property type="entry name" value="PHOSPHOGLYCERATE MUTASE-RELATED"/>
    <property type="match status" value="1"/>
</dbReference>
<dbReference type="PANTHER" id="PTHR20935:SF0">
    <property type="entry name" value="SERINE_THREONINE-PROTEIN PHOSPHATASE PGAM5, MITOCHONDRIAL"/>
    <property type="match status" value="1"/>
</dbReference>
<dbReference type="Pfam" id="PF00300">
    <property type="entry name" value="His_Phos_1"/>
    <property type="match status" value="2"/>
</dbReference>
<dbReference type="SMART" id="SM00855">
    <property type="entry name" value="PGAM"/>
    <property type="match status" value="1"/>
</dbReference>
<dbReference type="SUPFAM" id="SSF53254">
    <property type="entry name" value="Phosphoglycerate mutase-like"/>
    <property type="match status" value="1"/>
</dbReference>
<accession>Q61CA3</accession>
<accession>A8XGV6</accession>
<proteinExistence type="inferred from homology"/>
<sequence length="283" mass="32352">MVSKILMYGLPSAAVAVGTALLNEDNRNTIFRKAFAFTQNHTPKSFDEHFPRGEWDKNWDFRDPTSLVDKSKWEKADEVGKKKLLEECKATASRNIFLIRHGQYHLDREQKHLTELGREQAELLGKRLANSDIKFTNMTMSTMTRATETANIILKHLPGDLPKSSSSLIEEGPPYPPVPDHKTWRPLDPEFYTEAARIESAFRKLIHRAPPSQKEDSYELIVCHANVIRYFICRALQFPPEGWLRMSLGNCSITWLVIRPKGHVSIRSVGDIGHLTPNKISFT</sequence>
<organism>
    <name type="scientific">Caenorhabditis briggsae</name>
    <dbReference type="NCBI Taxonomy" id="6238"/>
    <lineage>
        <taxon>Eukaryota</taxon>
        <taxon>Metazoa</taxon>
        <taxon>Ecdysozoa</taxon>
        <taxon>Nematoda</taxon>
        <taxon>Chromadorea</taxon>
        <taxon>Rhabditida</taxon>
        <taxon>Rhabditina</taxon>
        <taxon>Rhabditomorpha</taxon>
        <taxon>Rhabditoidea</taxon>
        <taxon>Rhabditidae</taxon>
        <taxon>Peloderinae</taxon>
        <taxon>Caenorhabditis</taxon>
    </lineage>
</organism>
<protein>
    <recommendedName>
        <fullName>Serine/threonine-protein phosphatase Pgam5, mitochondrial</fullName>
        <ecNumber evidence="2">3.1.3.16</ecNumber>
    </recommendedName>
    <alternativeName>
        <fullName>Phosphoglycerate mutase family member 5 homolog</fullName>
    </alternativeName>
</protein>